<protein>
    <recommendedName>
        <fullName>Enterocin E-760</fullName>
    </recommendedName>
    <alternativeName>
        <fullName>Bacteriocin E-760</fullName>
    </alternativeName>
</protein>
<proteinExistence type="evidence at protein level"/>
<evidence type="ECO:0000255" key="1"/>
<evidence type="ECO:0000269" key="2">
    <source>
    </source>
</evidence>
<evidence type="ECO:0000305" key="3"/>
<dbReference type="GO" id="GO:0005576">
    <property type="term" value="C:extracellular region"/>
    <property type="evidence" value="ECO:0007669"/>
    <property type="project" value="UniProtKB-SubCell"/>
</dbReference>
<dbReference type="GO" id="GO:0042742">
    <property type="term" value="P:defense response to bacterium"/>
    <property type="evidence" value="ECO:0007669"/>
    <property type="project" value="UniProtKB-KW"/>
</dbReference>
<dbReference type="GO" id="GO:0031640">
    <property type="term" value="P:killing of cells of another organism"/>
    <property type="evidence" value="ECO:0007669"/>
    <property type="project" value="UniProtKB-KW"/>
</dbReference>
<comment type="function">
    <text evidence="2">Bacteriocin active against the Gram-negative bacteria S.enteritidis, S.choleraesuis, S.typhimurium, S.gallinarum, E.coli O157:H7, Y.enterocolitica, C.freundii, K.pneumoniae, S.dysentriae, P.aeruginosa, P.mirabilis, M.morganii, C.jejuni and 20 other Campylobacter isolates, and the Gram-positive bacteria S.aureus, S.epidermidis and L.monocytogenes.</text>
</comment>
<comment type="biophysicochemical properties">
    <phDependence>
        <text evidence="2">Stable between pH 5.0 and pH 8.7. Activity is lost at pH 3.0 and above pH 9.5.</text>
    </phDependence>
    <temperatureDependence>
        <text evidence="2">Thermostable, retains activity after heating at 100 degrees Celsius for 5 minutes.</text>
    </temperatureDependence>
</comment>
<comment type="subcellular location">
    <subcellularLocation>
        <location evidence="2">Secreted</location>
    </subcellularLocation>
</comment>
<comment type="mass spectrometry" mass="5362.0" method="MALDI" evidence="2"/>
<comment type="similarity">
    <text evidence="1">Belongs to the bacteriocin class IIB family.</text>
</comment>
<organism>
    <name type="scientific">Enterococcus sp</name>
    <dbReference type="NCBI Taxonomy" id="35783"/>
    <lineage>
        <taxon>Bacteria</taxon>
        <taxon>Bacillati</taxon>
        <taxon>Bacillota</taxon>
        <taxon>Bacilli</taxon>
        <taxon>Lactobacillales</taxon>
        <taxon>Enterococcaceae</taxon>
        <taxon>Enterococcus</taxon>
    </lineage>
</organism>
<feature type="chain" id="PRO_0000320547" description="Enterocin E-760">
    <location>
        <begin position="1"/>
        <end position="62"/>
    </location>
</feature>
<keyword id="KW-0044">Antibiotic</keyword>
<keyword id="KW-0929">Antimicrobial</keyword>
<keyword id="KW-0078">Bacteriocin</keyword>
<keyword id="KW-0903">Direct protein sequencing</keyword>
<keyword id="KW-0964">Secreted</keyword>
<sequence length="62" mass="6180">NRWYCNSAAGGVGGAAVCGLAGYVGEAKENIAGEVRKGWGMAGGFTHNKACKSFPGSGWASG</sequence>
<reference evidence="3" key="1">
    <citation type="journal article" date="2008" name="Antimicrob. Agents Chemother.">
        <title>Isolation and purification of enterocin E-760 with broad antimicrobial activity against Gram-positive and Gram-negative bacteria.</title>
        <authorList>
            <person name="Line J.E."/>
            <person name="Svetoch E.A."/>
            <person name="Eruslanov B.V."/>
            <person name="Perelygin V.V."/>
            <person name="Mitsevich E.V."/>
            <person name="Mitsevich I.P."/>
            <person name="Levchuk V.P."/>
            <person name="Svetoch O.E."/>
            <person name="Seal B."/>
            <person name="Siragusa G."/>
            <person name="Stern N.J."/>
        </authorList>
    </citation>
    <scope>PROTEIN SEQUENCE</scope>
    <scope>FUNCTION</scope>
    <scope>BIOPHYSICOCHEMICAL PROPERTIES</scope>
    <scope>SUBCELLULAR LOCATION</scope>
    <scope>MASS SPECTROMETRY</scope>
    <source>
        <strain evidence="2">NRRL B-30745</strain>
    </source>
</reference>
<accession>P85147</accession>
<name>ETC76_ENTSX</name>